<evidence type="ECO:0000255" key="1">
    <source>
        <dbReference type="HAMAP-Rule" id="MF_00528"/>
    </source>
</evidence>
<gene>
    <name type="ordered locus">Tbd_1557</name>
</gene>
<comment type="function">
    <text evidence="1">Nucleoside triphosphate pyrophosphatase that hydrolyzes 7-methyl-GTP (m(7)GTP). May have a dual role in cell division arrest and in preventing the incorporation of modified nucleotides into cellular nucleic acids.</text>
</comment>
<comment type="catalytic activity">
    <reaction evidence="1">
        <text>N(7)-methyl-GTP + H2O = N(7)-methyl-GMP + diphosphate + H(+)</text>
        <dbReference type="Rhea" id="RHEA:58744"/>
        <dbReference type="ChEBI" id="CHEBI:15377"/>
        <dbReference type="ChEBI" id="CHEBI:15378"/>
        <dbReference type="ChEBI" id="CHEBI:33019"/>
        <dbReference type="ChEBI" id="CHEBI:58285"/>
        <dbReference type="ChEBI" id="CHEBI:87133"/>
    </reaction>
</comment>
<comment type="cofactor">
    <cofactor evidence="1">
        <name>a divalent metal cation</name>
        <dbReference type="ChEBI" id="CHEBI:60240"/>
    </cofactor>
</comment>
<comment type="subcellular location">
    <subcellularLocation>
        <location evidence="1">Cytoplasm</location>
    </subcellularLocation>
</comment>
<comment type="similarity">
    <text evidence="1">Belongs to the Maf family. YceF subfamily.</text>
</comment>
<dbReference type="EC" id="3.6.1.-" evidence="1"/>
<dbReference type="EMBL" id="CP000116">
    <property type="protein sequence ID" value="AAZ97510.1"/>
    <property type="molecule type" value="Genomic_DNA"/>
</dbReference>
<dbReference type="RefSeq" id="WP_011312069.1">
    <property type="nucleotide sequence ID" value="NC_007404.1"/>
</dbReference>
<dbReference type="SMR" id="Q3SIL8"/>
<dbReference type="STRING" id="292415.Tbd_1557"/>
<dbReference type="KEGG" id="tbd:Tbd_1557"/>
<dbReference type="eggNOG" id="COG0424">
    <property type="taxonomic scope" value="Bacteria"/>
</dbReference>
<dbReference type="HOGENOM" id="CLU_040416_1_0_4"/>
<dbReference type="OrthoDB" id="9813694at2"/>
<dbReference type="Proteomes" id="UP000008291">
    <property type="component" value="Chromosome"/>
</dbReference>
<dbReference type="GO" id="GO:0005737">
    <property type="term" value="C:cytoplasm"/>
    <property type="evidence" value="ECO:0007669"/>
    <property type="project" value="UniProtKB-SubCell"/>
</dbReference>
<dbReference type="GO" id="GO:0047429">
    <property type="term" value="F:nucleoside triphosphate diphosphatase activity"/>
    <property type="evidence" value="ECO:0007669"/>
    <property type="project" value="InterPro"/>
</dbReference>
<dbReference type="GO" id="GO:0009117">
    <property type="term" value="P:nucleotide metabolic process"/>
    <property type="evidence" value="ECO:0007669"/>
    <property type="project" value="UniProtKB-KW"/>
</dbReference>
<dbReference type="CDD" id="cd00555">
    <property type="entry name" value="Maf"/>
    <property type="match status" value="1"/>
</dbReference>
<dbReference type="FunFam" id="3.90.950.10:FF:000005">
    <property type="entry name" value="7-methyl-GTP pyrophosphatase"/>
    <property type="match status" value="1"/>
</dbReference>
<dbReference type="Gene3D" id="3.90.950.10">
    <property type="match status" value="1"/>
</dbReference>
<dbReference type="HAMAP" id="MF_00528">
    <property type="entry name" value="Maf"/>
    <property type="match status" value="1"/>
</dbReference>
<dbReference type="InterPro" id="IPR029001">
    <property type="entry name" value="ITPase-like_fam"/>
</dbReference>
<dbReference type="InterPro" id="IPR003697">
    <property type="entry name" value="Maf-like"/>
</dbReference>
<dbReference type="NCBIfam" id="TIGR00172">
    <property type="entry name" value="maf"/>
    <property type="match status" value="1"/>
</dbReference>
<dbReference type="PANTHER" id="PTHR43213">
    <property type="entry name" value="BIFUNCTIONAL DTTP/UTP PYROPHOSPHATASE/METHYLTRANSFERASE PROTEIN-RELATED"/>
    <property type="match status" value="1"/>
</dbReference>
<dbReference type="PANTHER" id="PTHR43213:SF5">
    <property type="entry name" value="BIFUNCTIONAL DTTP_UTP PYROPHOSPHATASE_METHYLTRANSFERASE PROTEIN-RELATED"/>
    <property type="match status" value="1"/>
</dbReference>
<dbReference type="Pfam" id="PF02545">
    <property type="entry name" value="Maf"/>
    <property type="match status" value="1"/>
</dbReference>
<dbReference type="PIRSF" id="PIRSF006305">
    <property type="entry name" value="Maf"/>
    <property type="match status" value="1"/>
</dbReference>
<dbReference type="SUPFAM" id="SSF52972">
    <property type="entry name" value="ITPase-like"/>
    <property type="match status" value="1"/>
</dbReference>
<name>NTPPB_THIDA</name>
<reference key="1">
    <citation type="journal article" date="2006" name="J. Bacteriol.">
        <title>The genome sequence of the obligately chemolithoautotrophic, facultatively anaerobic bacterium Thiobacillus denitrificans.</title>
        <authorList>
            <person name="Beller H.R."/>
            <person name="Chain P.S."/>
            <person name="Letain T.E."/>
            <person name="Chakicherla A."/>
            <person name="Larimer F.W."/>
            <person name="Richardson P.M."/>
            <person name="Coleman M.A."/>
            <person name="Wood A.P."/>
            <person name="Kelly D.P."/>
        </authorList>
    </citation>
    <scope>NUCLEOTIDE SEQUENCE [LARGE SCALE GENOMIC DNA]</scope>
    <source>
        <strain>ATCC 25259 / T1</strain>
    </source>
</reference>
<feature type="chain" id="PRO_0000267455" description="7-methyl-GTP pyrophosphatase">
    <location>
        <begin position="1"/>
        <end position="201"/>
    </location>
</feature>
<feature type="active site" description="Proton acceptor" evidence="1">
    <location>
        <position position="73"/>
    </location>
</feature>
<feature type="site" description="Important for substrate specificity" evidence="1">
    <location>
        <position position="16"/>
    </location>
</feature>
<feature type="site" description="Important for substrate specificity" evidence="1">
    <location>
        <position position="74"/>
    </location>
</feature>
<feature type="site" description="Important for substrate specificity" evidence="1">
    <location>
        <position position="158"/>
    </location>
</feature>
<organism>
    <name type="scientific">Thiobacillus denitrificans (strain ATCC 25259 / T1)</name>
    <dbReference type="NCBI Taxonomy" id="292415"/>
    <lineage>
        <taxon>Bacteria</taxon>
        <taxon>Pseudomonadati</taxon>
        <taxon>Pseudomonadota</taxon>
        <taxon>Betaproteobacteria</taxon>
        <taxon>Nitrosomonadales</taxon>
        <taxon>Thiobacillaceae</taxon>
        <taxon>Thiobacillus</taxon>
    </lineage>
</organism>
<protein>
    <recommendedName>
        <fullName evidence="1">7-methyl-GTP pyrophosphatase</fullName>
        <shortName evidence="1">m(7)GTP pyrophosphatase</shortName>
        <ecNumber evidence="1">3.6.1.-</ecNumber>
    </recommendedName>
</protein>
<accession>Q3SIL8</accession>
<proteinExistence type="inferred from homology"/>
<sequence>MTRTSPTLVLASTSRYRRELLARLRLPFEVLAPNVDETPLPGETRSATALRLSVLKAQAAAMTHRDALVIGSDQVLMLGTEQLGKPGDHERAFAQLKKMQGRAMVFHTALTLLNSRTGSVQTRDVPTVVHIRPLTDAQIEAYLKKEQPYDCAGSAKSEALGIALMERMESPDPTALIGLPLMALTEMLAQEGVDVLTWPAT</sequence>
<keyword id="KW-0963">Cytoplasm</keyword>
<keyword id="KW-0378">Hydrolase</keyword>
<keyword id="KW-0546">Nucleotide metabolism</keyword>
<keyword id="KW-1185">Reference proteome</keyword>